<proteinExistence type="evidence at transcript level"/>
<dbReference type="EMBL" id="AC009398">
    <property type="protein sequence ID" value="AAF17671.1"/>
    <property type="status" value="ALT_SEQ"/>
    <property type="molecule type" value="Genomic_DNA"/>
</dbReference>
<dbReference type="EMBL" id="AC010796">
    <property type="protein sequence ID" value="AAG52463.1"/>
    <property type="molecule type" value="Genomic_DNA"/>
</dbReference>
<dbReference type="EMBL" id="CP002684">
    <property type="protein sequence ID" value="AEE35068.1"/>
    <property type="molecule type" value="Genomic_DNA"/>
</dbReference>
<dbReference type="EMBL" id="CP002684">
    <property type="protein sequence ID" value="AEE35069.1"/>
    <property type="molecule type" value="Genomic_DNA"/>
</dbReference>
<dbReference type="EMBL" id="CP002684">
    <property type="protein sequence ID" value="AEE35070.1"/>
    <property type="molecule type" value="Genomic_DNA"/>
</dbReference>
<dbReference type="EMBL" id="CP002684">
    <property type="protein sequence ID" value="ANM60800.1"/>
    <property type="molecule type" value="Genomic_DNA"/>
</dbReference>
<dbReference type="EMBL" id="CP002684">
    <property type="protein sequence ID" value="ANM60801.1"/>
    <property type="molecule type" value="Genomic_DNA"/>
</dbReference>
<dbReference type="EMBL" id="CP002684">
    <property type="protein sequence ID" value="ANM60802.1"/>
    <property type="molecule type" value="Genomic_DNA"/>
</dbReference>
<dbReference type="EMBL" id="CP002684">
    <property type="protein sequence ID" value="ANM60803.1"/>
    <property type="molecule type" value="Genomic_DNA"/>
</dbReference>
<dbReference type="EMBL" id="AF360164">
    <property type="protein sequence ID" value="AAK25874.1"/>
    <property type="molecule type" value="mRNA"/>
</dbReference>
<dbReference type="EMBL" id="AY056341">
    <property type="protein sequence ID" value="AAL07190.1"/>
    <property type="molecule type" value="mRNA"/>
</dbReference>
<dbReference type="EMBL" id="AY087235">
    <property type="protein sequence ID" value="AAM64791.1"/>
    <property type="molecule type" value="mRNA"/>
</dbReference>
<dbReference type="PIR" id="G96728">
    <property type="entry name" value="G96728"/>
</dbReference>
<dbReference type="RefSeq" id="NP_001323060.1">
    <property type="nucleotide sequence ID" value="NM_001334454.1"/>
</dbReference>
<dbReference type="RefSeq" id="NP_001323061.1">
    <property type="nucleotide sequence ID" value="NM_001334455.1"/>
</dbReference>
<dbReference type="RefSeq" id="NP_001323062.1">
    <property type="nucleotide sequence ID" value="NM_001334452.1"/>
</dbReference>
<dbReference type="RefSeq" id="NP_001323063.1">
    <property type="nucleotide sequence ID" value="NM_001334453.1"/>
</dbReference>
<dbReference type="RefSeq" id="NP_177206.1">
    <property type="nucleotide sequence ID" value="NM_105717.3"/>
</dbReference>
<dbReference type="RefSeq" id="NP_850975.1">
    <property type="nucleotide sequence ID" value="NM_180644.3"/>
</dbReference>
<dbReference type="RefSeq" id="NP_974120.1">
    <property type="nucleotide sequence ID" value="NM_202391.2"/>
</dbReference>
<dbReference type="SMR" id="P0DH91"/>
<dbReference type="BioGRID" id="24195">
    <property type="interactions" value="5"/>
</dbReference>
<dbReference type="BioGRID" id="28605">
    <property type="interactions" value="10"/>
</dbReference>
<dbReference type="FunCoup" id="P0DH91">
    <property type="interactions" value="4524"/>
</dbReference>
<dbReference type="IntAct" id="P0DH91">
    <property type="interactions" value="9"/>
</dbReference>
<dbReference type="STRING" id="3702.P0DH91"/>
<dbReference type="EnsemblPlants" id="AT1G23490.1">
    <property type="protein sequence ID" value="AT1G23490.1"/>
    <property type="gene ID" value="AT1G23490"/>
</dbReference>
<dbReference type="EnsemblPlants" id="AT1G70490.1">
    <property type="protein sequence ID" value="AT1G70490.1"/>
    <property type="gene ID" value="AT1G70490"/>
</dbReference>
<dbReference type="EnsemblPlants" id="AT1G70490.2">
    <property type="protein sequence ID" value="AT1G70490.2"/>
    <property type="gene ID" value="AT1G70490"/>
</dbReference>
<dbReference type="EnsemblPlants" id="AT1G70490.3">
    <property type="protein sequence ID" value="AT1G70490.3"/>
    <property type="gene ID" value="AT1G70490"/>
</dbReference>
<dbReference type="EnsemblPlants" id="AT1G70490.4">
    <property type="protein sequence ID" value="AT1G70490.4"/>
    <property type="gene ID" value="AT1G70490"/>
</dbReference>
<dbReference type="EnsemblPlants" id="AT1G70490.5">
    <property type="protein sequence ID" value="AT1G70490.5"/>
    <property type="gene ID" value="AT1G70490"/>
</dbReference>
<dbReference type="EnsemblPlants" id="AT1G70490.6">
    <property type="protein sequence ID" value="AT1G70490.6"/>
    <property type="gene ID" value="AT1G70490"/>
</dbReference>
<dbReference type="EnsemblPlants" id="AT1G70490.7">
    <property type="protein sequence ID" value="AT1G70490.7"/>
    <property type="gene ID" value="AT1G70490"/>
</dbReference>
<dbReference type="GeneID" id="843385"/>
<dbReference type="Gramene" id="AT1G23490.1">
    <property type="protein sequence ID" value="AT1G23490.1"/>
    <property type="gene ID" value="AT1G23490"/>
</dbReference>
<dbReference type="Gramene" id="AT1G70490.1">
    <property type="protein sequence ID" value="AT1G70490.1"/>
    <property type="gene ID" value="AT1G70490"/>
</dbReference>
<dbReference type="Gramene" id="AT1G70490.2">
    <property type="protein sequence ID" value="AT1G70490.2"/>
    <property type="gene ID" value="AT1G70490"/>
</dbReference>
<dbReference type="Gramene" id="AT1G70490.3">
    <property type="protein sequence ID" value="AT1G70490.3"/>
    <property type="gene ID" value="AT1G70490"/>
</dbReference>
<dbReference type="Gramene" id="AT1G70490.4">
    <property type="protein sequence ID" value="AT1G70490.4"/>
    <property type="gene ID" value="AT1G70490"/>
</dbReference>
<dbReference type="Gramene" id="AT1G70490.5">
    <property type="protein sequence ID" value="AT1G70490.5"/>
    <property type="gene ID" value="AT1G70490"/>
</dbReference>
<dbReference type="Gramene" id="AT1G70490.6">
    <property type="protein sequence ID" value="AT1G70490.6"/>
    <property type="gene ID" value="AT1G70490"/>
</dbReference>
<dbReference type="Gramene" id="AT1G70490.7">
    <property type="protein sequence ID" value="AT1G70490.7"/>
    <property type="gene ID" value="AT1G70490"/>
</dbReference>
<dbReference type="KEGG" id="ath:AT1G23490"/>
<dbReference type="KEGG" id="ath:AT1G70490"/>
<dbReference type="Araport" id="AT1G70490"/>
<dbReference type="TAIR" id="AT1G70490">
    <property type="gene designation" value="ARFA1D"/>
</dbReference>
<dbReference type="HOGENOM" id="CLU_040729_9_3_1"/>
<dbReference type="InParanoid" id="P0DH91"/>
<dbReference type="OMA" id="KEIRILX"/>
<dbReference type="OrthoDB" id="1027437at2759"/>
<dbReference type="PhylomeDB" id="P0DH91"/>
<dbReference type="PRO" id="PR:P0DH91"/>
<dbReference type="Proteomes" id="UP000006548">
    <property type="component" value="Chromosome 1"/>
</dbReference>
<dbReference type="ExpressionAtlas" id="P0DH91">
    <property type="expression patterns" value="baseline and differential"/>
</dbReference>
<dbReference type="GO" id="GO:0005794">
    <property type="term" value="C:Golgi apparatus"/>
    <property type="evidence" value="ECO:0007005"/>
    <property type="project" value="TAIR"/>
</dbReference>
<dbReference type="GO" id="GO:0005739">
    <property type="term" value="C:mitochondrion"/>
    <property type="evidence" value="ECO:0007005"/>
    <property type="project" value="TAIR"/>
</dbReference>
<dbReference type="GO" id="GO:0000325">
    <property type="term" value="C:plant-type vacuole"/>
    <property type="evidence" value="ECO:0007005"/>
    <property type="project" value="TAIR"/>
</dbReference>
<dbReference type="GO" id="GO:0005886">
    <property type="term" value="C:plasma membrane"/>
    <property type="evidence" value="ECO:0007005"/>
    <property type="project" value="TAIR"/>
</dbReference>
<dbReference type="GO" id="GO:0005525">
    <property type="term" value="F:GTP binding"/>
    <property type="evidence" value="ECO:0000250"/>
    <property type="project" value="TAIR"/>
</dbReference>
<dbReference type="GO" id="GO:0003924">
    <property type="term" value="F:GTPase activity"/>
    <property type="evidence" value="ECO:0007669"/>
    <property type="project" value="InterPro"/>
</dbReference>
<dbReference type="GO" id="GO:0003729">
    <property type="term" value="F:mRNA binding"/>
    <property type="evidence" value="ECO:0000314"/>
    <property type="project" value="TAIR"/>
</dbReference>
<dbReference type="GO" id="GO:0016004">
    <property type="term" value="F:phospholipase activator activity"/>
    <property type="evidence" value="ECO:0000304"/>
    <property type="project" value="TAIR"/>
</dbReference>
<dbReference type="GO" id="GO:0015031">
    <property type="term" value="P:protein transport"/>
    <property type="evidence" value="ECO:0007669"/>
    <property type="project" value="UniProtKB-KW"/>
</dbReference>
<dbReference type="GO" id="GO:0016192">
    <property type="term" value="P:vesicle-mediated transport"/>
    <property type="evidence" value="ECO:0007669"/>
    <property type="project" value="UniProtKB-KW"/>
</dbReference>
<dbReference type="CDD" id="cd04150">
    <property type="entry name" value="Arf1_5_like"/>
    <property type="match status" value="1"/>
</dbReference>
<dbReference type="FunFam" id="3.40.50.300:FF:003500">
    <property type="entry name" value="ADP-ribosylation factor 1"/>
    <property type="match status" value="1"/>
</dbReference>
<dbReference type="Gene3D" id="3.40.50.300">
    <property type="entry name" value="P-loop containing nucleotide triphosphate hydrolases"/>
    <property type="match status" value="1"/>
</dbReference>
<dbReference type="InterPro" id="IPR045872">
    <property type="entry name" value="Arf1-5-like"/>
</dbReference>
<dbReference type="InterPro" id="IPR027417">
    <property type="entry name" value="P-loop_NTPase"/>
</dbReference>
<dbReference type="InterPro" id="IPR005225">
    <property type="entry name" value="Small_GTP-bd"/>
</dbReference>
<dbReference type="InterPro" id="IPR024156">
    <property type="entry name" value="Small_GTPase_ARF"/>
</dbReference>
<dbReference type="InterPro" id="IPR006689">
    <property type="entry name" value="Small_GTPase_ARF/SAR"/>
</dbReference>
<dbReference type="NCBIfam" id="TIGR00231">
    <property type="entry name" value="small_GTP"/>
    <property type="match status" value="1"/>
</dbReference>
<dbReference type="PANTHER" id="PTHR11711">
    <property type="entry name" value="ADP RIBOSYLATION FACTOR-RELATED"/>
    <property type="match status" value="1"/>
</dbReference>
<dbReference type="Pfam" id="PF00025">
    <property type="entry name" value="Arf"/>
    <property type="match status" value="1"/>
</dbReference>
<dbReference type="PRINTS" id="PR00328">
    <property type="entry name" value="SAR1GTPBP"/>
</dbReference>
<dbReference type="SMART" id="SM00177">
    <property type="entry name" value="ARF"/>
    <property type="match status" value="1"/>
</dbReference>
<dbReference type="SMART" id="SM00175">
    <property type="entry name" value="RAB"/>
    <property type="match status" value="1"/>
</dbReference>
<dbReference type="SMART" id="SM00178">
    <property type="entry name" value="SAR"/>
    <property type="match status" value="1"/>
</dbReference>
<dbReference type="SUPFAM" id="SSF52540">
    <property type="entry name" value="P-loop containing nucleoside triphosphate hydrolases"/>
    <property type="match status" value="1"/>
</dbReference>
<dbReference type="PROSITE" id="PS51417">
    <property type="entry name" value="ARF"/>
    <property type="match status" value="1"/>
</dbReference>
<name>ARF2B_ARATH</name>
<feature type="initiator methionine" description="Removed" evidence="2">
    <location>
        <position position="1"/>
    </location>
</feature>
<feature type="chain" id="PRO_0000415772" description="ADP-ribosylation factor 2-B">
    <location>
        <begin position="2"/>
        <end position="181"/>
    </location>
</feature>
<feature type="binding site" evidence="1">
    <location>
        <begin position="24"/>
        <end position="31"/>
    </location>
    <ligand>
        <name>GTP</name>
        <dbReference type="ChEBI" id="CHEBI:37565"/>
    </ligand>
</feature>
<feature type="binding site" evidence="1">
    <location>
        <begin position="67"/>
        <end position="71"/>
    </location>
    <ligand>
        <name>GTP</name>
        <dbReference type="ChEBI" id="CHEBI:37565"/>
    </ligand>
</feature>
<feature type="binding site" evidence="1">
    <location>
        <begin position="126"/>
        <end position="129"/>
    </location>
    <ligand>
        <name>GTP</name>
        <dbReference type="ChEBI" id="CHEBI:37565"/>
    </ligand>
</feature>
<feature type="lipid moiety-binding region" description="N-myristoyl glycine" evidence="2">
    <location>
        <position position="2"/>
    </location>
</feature>
<reference key="1">
    <citation type="journal article" date="2000" name="Nature">
        <title>Sequence and analysis of chromosome 1 of the plant Arabidopsis thaliana.</title>
        <authorList>
            <person name="Theologis A."/>
            <person name="Ecker J.R."/>
            <person name="Palm C.J."/>
            <person name="Federspiel N.A."/>
            <person name="Kaul S."/>
            <person name="White O."/>
            <person name="Alonso J."/>
            <person name="Altafi H."/>
            <person name="Araujo R."/>
            <person name="Bowman C.L."/>
            <person name="Brooks S.Y."/>
            <person name="Buehler E."/>
            <person name="Chan A."/>
            <person name="Chao Q."/>
            <person name="Chen H."/>
            <person name="Cheuk R.F."/>
            <person name="Chin C.W."/>
            <person name="Chung M.K."/>
            <person name="Conn L."/>
            <person name="Conway A.B."/>
            <person name="Conway A.R."/>
            <person name="Creasy T.H."/>
            <person name="Dewar K."/>
            <person name="Dunn P."/>
            <person name="Etgu P."/>
            <person name="Feldblyum T.V."/>
            <person name="Feng J.-D."/>
            <person name="Fong B."/>
            <person name="Fujii C.Y."/>
            <person name="Gill J.E."/>
            <person name="Goldsmith A.D."/>
            <person name="Haas B."/>
            <person name="Hansen N.F."/>
            <person name="Hughes B."/>
            <person name="Huizar L."/>
            <person name="Hunter J.L."/>
            <person name="Jenkins J."/>
            <person name="Johnson-Hopson C."/>
            <person name="Khan S."/>
            <person name="Khaykin E."/>
            <person name="Kim C.J."/>
            <person name="Koo H.L."/>
            <person name="Kremenetskaia I."/>
            <person name="Kurtz D.B."/>
            <person name="Kwan A."/>
            <person name="Lam B."/>
            <person name="Langin-Hooper S."/>
            <person name="Lee A."/>
            <person name="Lee J.M."/>
            <person name="Lenz C.A."/>
            <person name="Li J.H."/>
            <person name="Li Y.-P."/>
            <person name="Lin X."/>
            <person name="Liu S.X."/>
            <person name="Liu Z.A."/>
            <person name="Luros J.S."/>
            <person name="Maiti R."/>
            <person name="Marziali A."/>
            <person name="Militscher J."/>
            <person name="Miranda M."/>
            <person name="Nguyen M."/>
            <person name="Nierman W.C."/>
            <person name="Osborne B.I."/>
            <person name="Pai G."/>
            <person name="Peterson J."/>
            <person name="Pham P.K."/>
            <person name="Rizzo M."/>
            <person name="Rooney T."/>
            <person name="Rowley D."/>
            <person name="Sakano H."/>
            <person name="Salzberg S.L."/>
            <person name="Schwartz J.R."/>
            <person name="Shinn P."/>
            <person name="Southwick A.M."/>
            <person name="Sun H."/>
            <person name="Tallon L.J."/>
            <person name="Tambunga G."/>
            <person name="Toriumi M.J."/>
            <person name="Town C.D."/>
            <person name="Utterback T."/>
            <person name="Van Aken S."/>
            <person name="Vaysberg M."/>
            <person name="Vysotskaia V.S."/>
            <person name="Walker M."/>
            <person name="Wu D."/>
            <person name="Yu G."/>
            <person name="Fraser C.M."/>
            <person name="Venter J.C."/>
            <person name="Davis R.W."/>
        </authorList>
    </citation>
    <scope>NUCLEOTIDE SEQUENCE [LARGE SCALE GENOMIC DNA]</scope>
    <source>
        <strain>cv. Columbia</strain>
    </source>
</reference>
<reference key="2">
    <citation type="journal article" date="2017" name="Plant J.">
        <title>Araport11: a complete reannotation of the Arabidopsis thaliana reference genome.</title>
        <authorList>
            <person name="Cheng C.Y."/>
            <person name="Krishnakumar V."/>
            <person name="Chan A.P."/>
            <person name="Thibaud-Nissen F."/>
            <person name="Schobel S."/>
            <person name="Town C.D."/>
        </authorList>
    </citation>
    <scope>GENOME REANNOTATION</scope>
    <source>
        <strain>cv. Columbia</strain>
    </source>
</reference>
<reference key="3">
    <citation type="journal article" date="2003" name="Science">
        <title>Empirical analysis of transcriptional activity in the Arabidopsis genome.</title>
        <authorList>
            <person name="Yamada K."/>
            <person name="Lim J."/>
            <person name="Dale J.M."/>
            <person name="Chen H."/>
            <person name="Shinn P."/>
            <person name="Palm C.J."/>
            <person name="Southwick A.M."/>
            <person name="Wu H.C."/>
            <person name="Kim C.J."/>
            <person name="Nguyen M."/>
            <person name="Pham P.K."/>
            <person name="Cheuk R.F."/>
            <person name="Karlin-Newmann G."/>
            <person name="Liu S.X."/>
            <person name="Lam B."/>
            <person name="Sakano H."/>
            <person name="Wu T."/>
            <person name="Yu G."/>
            <person name="Miranda M."/>
            <person name="Quach H.L."/>
            <person name="Tripp M."/>
            <person name="Chang C.H."/>
            <person name="Lee J.M."/>
            <person name="Toriumi M.J."/>
            <person name="Chan M.M."/>
            <person name="Tang C.C."/>
            <person name="Onodera C.S."/>
            <person name="Deng J.M."/>
            <person name="Akiyama K."/>
            <person name="Ansari Y."/>
            <person name="Arakawa T."/>
            <person name="Banh J."/>
            <person name="Banno F."/>
            <person name="Bowser L."/>
            <person name="Brooks S.Y."/>
            <person name="Carninci P."/>
            <person name="Chao Q."/>
            <person name="Choy N."/>
            <person name="Enju A."/>
            <person name="Goldsmith A.D."/>
            <person name="Gurjal M."/>
            <person name="Hansen N.F."/>
            <person name="Hayashizaki Y."/>
            <person name="Johnson-Hopson C."/>
            <person name="Hsuan V.W."/>
            <person name="Iida K."/>
            <person name="Karnes M."/>
            <person name="Khan S."/>
            <person name="Koesema E."/>
            <person name="Ishida J."/>
            <person name="Jiang P.X."/>
            <person name="Jones T."/>
            <person name="Kawai J."/>
            <person name="Kamiya A."/>
            <person name="Meyers C."/>
            <person name="Nakajima M."/>
            <person name="Narusaka M."/>
            <person name="Seki M."/>
            <person name="Sakurai T."/>
            <person name="Satou M."/>
            <person name="Tamse R."/>
            <person name="Vaysberg M."/>
            <person name="Wallender E.K."/>
            <person name="Wong C."/>
            <person name="Yamamura Y."/>
            <person name="Yuan S."/>
            <person name="Shinozaki K."/>
            <person name="Davis R.W."/>
            <person name="Theologis A."/>
            <person name="Ecker J.R."/>
        </authorList>
    </citation>
    <scope>NUCLEOTIDE SEQUENCE [LARGE SCALE MRNA]</scope>
    <source>
        <strain>cv. Columbia</strain>
    </source>
</reference>
<reference key="4">
    <citation type="submission" date="2002-03" db="EMBL/GenBank/DDBJ databases">
        <title>Full-length cDNA from Arabidopsis thaliana.</title>
        <authorList>
            <person name="Brover V.V."/>
            <person name="Troukhan M.E."/>
            <person name="Alexandrov N.A."/>
            <person name="Lu Y.-P."/>
            <person name="Flavell R.B."/>
            <person name="Feldmann K.A."/>
        </authorList>
    </citation>
    <scope>NUCLEOTIDE SEQUENCE [LARGE SCALE MRNA]</scope>
</reference>
<reference key="5">
    <citation type="journal article" date="2006" name="Plant Physiol.">
        <title>RPA, a class II ARFGAP protein, activates ARF1 and U5 and plays a role in root hair development in Arabidopsis.</title>
        <authorList>
            <person name="Song X.-F."/>
            <person name="Yang C.-Y."/>
            <person name="Liu J."/>
            <person name="Yang W.-C."/>
        </authorList>
    </citation>
    <scope>ACTIVITY REGULATION</scope>
</reference>
<gene>
    <name type="primary">ARF2-B</name>
    <name type="synonym">ARFA1-D</name>
    <name type="synonym">ARFA2-B</name>
    <name type="synonym">U5</name>
    <name type="ordered locus">At1g70490</name>
    <name type="ORF">F20B24.21</name>
    <name type="ORF">F24J13.6</name>
</gene>
<organism>
    <name type="scientific">Arabidopsis thaliana</name>
    <name type="common">Mouse-ear cress</name>
    <dbReference type="NCBI Taxonomy" id="3702"/>
    <lineage>
        <taxon>Eukaryota</taxon>
        <taxon>Viridiplantae</taxon>
        <taxon>Streptophyta</taxon>
        <taxon>Embryophyta</taxon>
        <taxon>Tracheophyta</taxon>
        <taxon>Spermatophyta</taxon>
        <taxon>Magnoliopsida</taxon>
        <taxon>eudicotyledons</taxon>
        <taxon>Gunneridae</taxon>
        <taxon>Pentapetalae</taxon>
        <taxon>rosids</taxon>
        <taxon>malvids</taxon>
        <taxon>Brassicales</taxon>
        <taxon>Brassicaceae</taxon>
        <taxon>Camelineae</taxon>
        <taxon>Arabidopsis</taxon>
    </lineage>
</organism>
<sequence length="181" mass="20593">MGLSFAKLFSRLFAKKEMRILMVGLDAAGKTTILYKLKLGEIVTTIPTIGFNVETVEYKNISFTVWDVGGQDKIRPLWRHYFQNTQGLIFVVDSNDRDRVVEARDELHRMLNEDELRDAVLLVFANKQDLPNAMNAAEITDKLGLHSLRQRHWYIQSTCATSGEGLYEGLDWLSNNIAGKA</sequence>
<accession>P0DH91</accession>
<accession>Q9S9K6</accession>
<accession>Q9SGY6</accession>
<accession>Q9SRC3</accession>
<comment type="function">
    <text>GTP-binding protein involved in protein trafficking; may modulate vesicle budding and uncoating within the Golgi apparatus.</text>
</comment>
<comment type="activity regulation">
    <text evidence="3">Activated by AGD10.</text>
</comment>
<comment type="subcellular location">
    <subcellularLocation>
        <location>Golgi apparatus</location>
    </subcellularLocation>
</comment>
<comment type="similarity">
    <text evidence="4">Belongs to the small GTPase superfamily. Arf family.</text>
</comment>
<comment type="sequence caution" evidence="4">
    <conflict type="erroneous gene model prediction">
        <sequence resource="EMBL-CDS" id="AAF17671"/>
    </conflict>
</comment>
<evidence type="ECO:0000250" key="1"/>
<evidence type="ECO:0000255" key="2"/>
<evidence type="ECO:0000269" key="3">
    <source>
    </source>
</evidence>
<evidence type="ECO:0000305" key="4"/>
<keyword id="KW-0931">ER-Golgi transport</keyword>
<keyword id="KW-0333">Golgi apparatus</keyword>
<keyword id="KW-0342">GTP-binding</keyword>
<keyword id="KW-0449">Lipoprotein</keyword>
<keyword id="KW-0519">Myristate</keyword>
<keyword id="KW-0547">Nucleotide-binding</keyword>
<keyword id="KW-0653">Protein transport</keyword>
<keyword id="KW-1185">Reference proteome</keyword>
<keyword id="KW-0813">Transport</keyword>
<protein>
    <recommendedName>
        <fullName>ADP-ribosylation factor 2-B</fullName>
        <shortName>AtARF2</shortName>
    </recommendedName>
    <alternativeName>
        <fullName>ARF1-like protein U5</fullName>
    </alternativeName>
</protein>